<proteinExistence type="inferred from homology"/>
<keyword id="KW-0067">ATP-binding</keyword>
<keyword id="KW-0143">Chaperone</keyword>
<keyword id="KW-0547">Nucleotide-binding</keyword>
<evidence type="ECO:0000255" key="1">
    <source>
        <dbReference type="HAMAP-Rule" id="MF_00679"/>
    </source>
</evidence>
<organism>
    <name type="scientific">Shewanella baltica (strain OS195)</name>
    <dbReference type="NCBI Taxonomy" id="399599"/>
    <lineage>
        <taxon>Bacteria</taxon>
        <taxon>Pseudomonadati</taxon>
        <taxon>Pseudomonadota</taxon>
        <taxon>Gammaproteobacteria</taxon>
        <taxon>Alteromonadales</taxon>
        <taxon>Shewanellaceae</taxon>
        <taxon>Shewanella</taxon>
    </lineage>
</organism>
<gene>
    <name evidence="1" type="primary">hscA</name>
    <name type="ordered locus">Sbal195_2498</name>
</gene>
<accession>A9L3Q6</accession>
<feature type="chain" id="PRO_1000082987" description="Chaperone protein HscA homolog">
    <location>
        <begin position="1"/>
        <end position="620"/>
    </location>
</feature>
<protein>
    <recommendedName>
        <fullName evidence="1">Chaperone protein HscA homolog</fullName>
    </recommendedName>
</protein>
<dbReference type="EMBL" id="CP000891">
    <property type="protein sequence ID" value="ABX49666.1"/>
    <property type="molecule type" value="Genomic_DNA"/>
</dbReference>
<dbReference type="RefSeq" id="WP_006086838.1">
    <property type="nucleotide sequence ID" value="NC_009997.1"/>
</dbReference>
<dbReference type="SMR" id="A9L3Q6"/>
<dbReference type="GeneID" id="11772604"/>
<dbReference type="KEGG" id="sbn:Sbal195_2498"/>
<dbReference type="HOGENOM" id="CLU_005965_2_1_6"/>
<dbReference type="Proteomes" id="UP000000770">
    <property type="component" value="Chromosome"/>
</dbReference>
<dbReference type="GO" id="GO:0005524">
    <property type="term" value="F:ATP binding"/>
    <property type="evidence" value="ECO:0007669"/>
    <property type="project" value="UniProtKB-KW"/>
</dbReference>
<dbReference type="GO" id="GO:0016887">
    <property type="term" value="F:ATP hydrolysis activity"/>
    <property type="evidence" value="ECO:0007669"/>
    <property type="project" value="UniProtKB-UniRule"/>
</dbReference>
<dbReference type="GO" id="GO:0140662">
    <property type="term" value="F:ATP-dependent protein folding chaperone"/>
    <property type="evidence" value="ECO:0007669"/>
    <property type="project" value="InterPro"/>
</dbReference>
<dbReference type="GO" id="GO:0051082">
    <property type="term" value="F:unfolded protein binding"/>
    <property type="evidence" value="ECO:0007669"/>
    <property type="project" value="InterPro"/>
</dbReference>
<dbReference type="GO" id="GO:0016226">
    <property type="term" value="P:iron-sulfur cluster assembly"/>
    <property type="evidence" value="ECO:0007669"/>
    <property type="project" value="InterPro"/>
</dbReference>
<dbReference type="FunFam" id="3.30.420.40:FF:000046">
    <property type="entry name" value="Chaperone protein HscA"/>
    <property type="match status" value="1"/>
</dbReference>
<dbReference type="FunFam" id="2.60.34.10:FF:000005">
    <property type="entry name" value="Chaperone protein HscA homolog"/>
    <property type="match status" value="1"/>
</dbReference>
<dbReference type="Gene3D" id="1.20.1270.10">
    <property type="match status" value="1"/>
</dbReference>
<dbReference type="Gene3D" id="3.30.420.40">
    <property type="match status" value="2"/>
</dbReference>
<dbReference type="Gene3D" id="3.90.640.10">
    <property type="entry name" value="Actin, Chain A, domain 4"/>
    <property type="match status" value="1"/>
</dbReference>
<dbReference type="Gene3D" id="2.60.34.10">
    <property type="entry name" value="Substrate Binding Domain Of DNAk, Chain A, domain 1"/>
    <property type="match status" value="1"/>
</dbReference>
<dbReference type="HAMAP" id="MF_00679">
    <property type="entry name" value="HscA"/>
    <property type="match status" value="1"/>
</dbReference>
<dbReference type="InterPro" id="IPR043129">
    <property type="entry name" value="ATPase_NBD"/>
</dbReference>
<dbReference type="InterPro" id="IPR018181">
    <property type="entry name" value="Heat_shock_70_CS"/>
</dbReference>
<dbReference type="InterPro" id="IPR029048">
    <property type="entry name" value="HSP70_C_sf"/>
</dbReference>
<dbReference type="InterPro" id="IPR029047">
    <property type="entry name" value="HSP70_peptide-bd_sf"/>
</dbReference>
<dbReference type="InterPro" id="IPR013126">
    <property type="entry name" value="Hsp_70_fam"/>
</dbReference>
<dbReference type="InterPro" id="IPR010236">
    <property type="entry name" value="ISC_FeS_clus_asmbl_HscA"/>
</dbReference>
<dbReference type="NCBIfam" id="TIGR01991">
    <property type="entry name" value="HscA"/>
    <property type="match status" value="1"/>
</dbReference>
<dbReference type="NCBIfam" id="NF003520">
    <property type="entry name" value="PRK05183.1"/>
    <property type="match status" value="1"/>
</dbReference>
<dbReference type="PANTHER" id="PTHR19375">
    <property type="entry name" value="HEAT SHOCK PROTEIN 70KDA"/>
    <property type="match status" value="1"/>
</dbReference>
<dbReference type="Pfam" id="PF00012">
    <property type="entry name" value="HSP70"/>
    <property type="match status" value="1"/>
</dbReference>
<dbReference type="PRINTS" id="PR00301">
    <property type="entry name" value="HEATSHOCK70"/>
</dbReference>
<dbReference type="SUPFAM" id="SSF53067">
    <property type="entry name" value="Actin-like ATPase domain"/>
    <property type="match status" value="2"/>
</dbReference>
<dbReference type="SUPFAM" id="SSF100934">
    <property type="entry name" value="Heat shock protein 70kD (HSP70), C-terminal subdomain"/>
    <property type="match status" value="1"/>
</dbReference>
<dbReference type="SUPFAM" id="SSF100920">
    <property type="entry name" value="Heat shock protein 70kD (HSP70), peptide-binding domain"/>
    <property type="match status" value="1"/>
</dbReference>
<dbReference type="PROSITE" id="PS00297">
    <property type="entry name" value="HSP70_1"/>
    <property type="match status" value="1"/>
</dbReference>
<dbReference type="PROSITE" id="PS00329">
    <property type="entry name" value="HSP70_2"/>
    <property type="match status" value="1"/>
</dbReference>
<sequence>MALLQIAEPGQSAAPHQHRLAVGIDLGTTNSLVAAVRSGETATLPDELGQHSLPSIVRYTQDSVEVGALAALSSAQDPQNTIVSVKRFMGRSLADIKAGEQSFPYEFAESENGLPLFVTPQGQVNPVQVSAEILRPLIARAEKTLGGELQGVVITVPAYFDDAQRQGTKDAAALLGVKVLRLLNEPTAAAIAYGLDSKQEGVIAIYDLGGGTFDISILRLNRGVFEVLATGGDSALGGDDFDHLLQAHMQQVWQLSDIDSQLSRQLLIESRRVKEALTDAAETEAKVILADGTELTQIVTKAEFDAMIAALVKKTIASCRRTLRDAGVTTDEVLETVMVGGSTRVPLVREQVEAFFGKPPLTSIDPDRVVAIGAAIQADILVGNKPESDLLLLDVIPLSLGIETMGGLVEKVVSRNTTIPVARAQEFTTFKDGQTAMAFHVVQGERELVADCRSLARFTLKGIPPLAAGAAHIRVTFQVDADGLLSVTAMEKSTGVQSSIQVKPSFGLSDTEIATMLKDSMKYAKDDIGRRMLAEQQVEAARVLESLHAALAKDGDLLNADERGQIDAIMANVAQVAAGDDADAIKLAIEKLDEQTQDFAARRMDNSIRVAFKGQSIDNI</sequence>
<reference key="1">
    <citation type="submission" date="2007-11" db="EMBL/GenBank/DDBJ databases">
        <title>Complete sequence of chromosome of Shewanella baltica OS195.</title>
        <authorList>
            <consortium name="US DOE Joint Genome Institute"/>
            <person name="Copeland A."/>
            <person name="Lucas S."/>
            <person name="Lapidus A."/>
            <person name="Barry K."/>
            <person name="Glavina del Rio T."/>
            <person name="Dalin E."/>
            <person name="Tice H."/>
            <person name="Pitluck S."/>
            <person name="Chain P."/>
            <person name="Malfatti S."/>
            <person name="Shin M."/>
            <person name="Vergez L."/>
            <person name="Schmutz J."/>
            <person name="Larimer F."/>
            <person name="Land M."/>
            <person name="Hauser L."/>
            <person name="Kyrpides N."/>
            <person name="Kim E."/>
            <person name="Brettar I."/>
            <person name="Rodrigues J."/>
            <person name="Konstantinidis K."/>
            <person name="Klappenbach J."/>
            <person name="Hofle M."/>
            <person name="Tiedje J."/>
            <person name="Richardson P."/>
        </authorList>
    </citation>
    <scope>NUCLEOTIDE SEQUENCE [LARGE SCALE GENOMIC DNA]</scope>
    <source>
        <strain>OS195</strain>
    </source>
</reference>
<name>HSCA_SHEB9</name>
<comment type="function">
    <text evidence="1">Chaperone involved in the maturation of iron-sulfur cluster-containing proteins. Has a low intrinsic ATPase activity which is markedly stimulated by HscB.</text>
</comment>
<comment type="similarity">
    <text evidence="1">Belongs to the heat shock protein 70 family.</text>
</comment>